<reference key="1">
    <citation type="journal article" date="2005" name="Nature">
        <title>Sequencing of Aspergillus nidulans and comparative analysis with A. fumigatus and A. oryzae.</title>
        <authorList>
            <person name="Galagan J.E."/>
            <person name="Calvo S.E."/>
            <person name="Cuomo C."/>
            <person name="Ma L.-J."/>
            <person name="Wortman J.R."/>
            <person name="Batzoglou S."/>
            <person name="Lee S.-I."/>
            <person name="Bastuerkmen M."/>
            <person name="Spevak C.C."/>
            <person name="Clutterbuck J."/>
            <person name="Kapitonov V."/>
            <person name="Jurka J."/>
            <person name="Scazzocchio C."/>
            <person name="Farman M.L."/>
            <person name="Butler J."/>
            <person name="Purcell S."/>
            <person name="Harris S."/>
            <person name="Braus G.H."/>
            <person name="Draht O."/>
            <person name="Busch S."/>
            <person name="D'Enfert C."/>
            <person name="Bouchier C."/>
            <person name="Goldman G.H."/>
            <person name="Bell-Pedersen D."/>
            <person name="Griffiths-Jones S."/>
            <person name="Doonan J.H."/>
            <person name="Yu J."/>
            <person name="Vienken K."/>
            <person name="Pain A."/>
            <person name="Freitag M."/>
            <person name="Selker E.U."/>
            <person name="Archer D.B."/>
            <person name="Penalva M.A."/>
            <person name="Oakley B.R."/>
            <person name="Momany M."/>
            <person name="Tanaka T."/>
            <person name="Kumagai T."/>
            <person name="Asai K."/>
            <person name="Machida M."/>
            <person name="Nierman W.C."/>
            <person name="Denning D.W."/>
            <person name="Caddick M.X."/>
            <person name="Hynes M."/>
            <person name="Paoletti M."/>
            <person name="Fischer R."/>
            <person name="Miller B.L."/>
            <person name="Dyer P.S."/>
            <person name="Sachs M.S."/>
            <person name="Osmani S.A."/>
            <person name="Birren B.W."/>
        </authorList>
    </citation>
    <scope>NUCLEOTIDE SEQUENCE [LARGE SCALE GENOMIC DNA]</scope>
    <source>
        <strain>FGSC A4 / ATCC 38163 / CBS 112.46 / NRRL 194 / M139</strain>
    </source>
</reference>
<reference key="2">
    <citation type="journal article" date="2009" name="Fungal Genet. Biol.">
        <title>The 2008 update of the Aspergillus nidulans genome annotation: a community effort.</title>
        <authorList>
            <person name="Wortman J.R."/>
            <person name="Gilsenan J.M."/>
            <person name="Joardar V."/>
            <person name="Deegan J."/>
            <person name="Clutterbuck J."/>
            <person name="Andersen M.R."/>
            <person name="Archer D."/>
            <person name="Bencina M."/>
            <person name="Braus G."/>
            <person name="Coutinho P."/>
            <person name="von Dohren H."/>
            <person name="Doonan J."/>
            <person name="Driessen A.J."/>
            <person name="Durek P."/>
            <person name="Espeso E."/>
            <person name="Fekete E."/>
            <person name="Flipphi M."/>
            <person name="Estrada C.G."/>
            <person name="Geysens S."/>
            <person name="Goldman G."/>
            <person name="de Groot P.W."/>
            <person name="Hansen K."/>
            <person name="Harris S.D."/>
            <person name="Heinekamp T."/>
            <person name="Helmstaedt K."/>
            <person name="Henrissat B."/>
            <person name="Hofmann G."/>
            <person name="Homan T."/>
            <person name="Horio T."/>
            <person name="Horiuchi H."/>
            <person name="James S."/>
            <person name="Jones M."/>
            <person name="Karaffa L."/>
            <person name="Karanyi Z."/>
            <person name="Kato M."/>
            <person name="Keller N."/>
            <person name="Kelly D.E."/>
            <person name="Kiel J.A."/>
            <person name="Kim J.M."/>
            <person name="van der Klei I.J."/>
            <person name="Klis F.M."/>
            <person name="Kovalchuk A."/>
            <person name="Krasevec N."/>
            <person name="Kubicek C.P."/>
            <person name="Liu B."/>
            <person name="Maccabe A."/>
            <person name="Meyer V."/>
            <person name="Mirabito P."/>
            <person name="Miskei M."/>
            <person name="Mos M."/>
            <person name="Mullins J."/>
            <person name="Nelson D.R."/>
            <person name="Nielsen J."/>
            <person name="Oakley B.R."/>
            <person name="Osmani S.A."/>
            <person name="Pakula T."/>
            <person name="Paszewski A."/>
            <person name="Paulsen I."/>
            <person name="Pilsyk S."/>
            <person name="Pocsi I."/>
            <person name="Punt P.J."/>
            <person name="Ram A.F."/>
            <person name="Ren Q."/>
            <person name="Robellet X."/>
            <person name="Robson G."/>
            <person name="Seiboth B."/>
            <person name="van Solingen P."/>
            <person name="Specht T."/>
            <person name="Sun J."/>
            <person name="Taheri-Talesh N."/>
            <person name="Takeshita N."/>
            <person name="Ussery D."/>
            <person name="vanKuyk P.A."/>
            <person name="Visser H."/>
            <person name="van de Vondervoort P.J."/>
            <person name="de Vries R.P."/>
            <person name="Walton J."/>
            <person name="Xiang X."/>
            <person name="Xiong Y."/>
            <person name="Zeng A.P."/>
            <person name="Brandt B.W."/>
            <person name="Cornell M.J."/>
            <person name="van den Hondel C.A."/>
            <person name="Visser J."/>
            <person name="Oliver S.G."/>
            <person name="Turner G."/>
        </authorList>
    </citation>
    <scope>GENOME REANNOTATION</scope>
    <source>
        <strain>FGSC A4 / ATCC 38163 / CBS 112.46 / NRRL 194 / M139</strain>
    </source>
</reference>
<keyword id="KW-0507">mRNA processing</keyword>
<keyword id="KW-0539">Nucleus</keyword>
<keyword id="KW-1185">Reference proteome</keyword>
<keyword id="KW-0804">Transcription</keyword>
<proteinExistence type="inferred from homology"/>
<accession>Q5BCN2</accession>
<accession>C8VNU8</accession>
<gene>
    <name type="primary">spt5</name>
    <name type="ORF">AN1698</name>
</gene>
<sequence length="1016" mass="109412">MSRNLMDQDFGSEEEDDDFNPAPAEESDNEEAHHDKTRKPDRDSDARNGSDDEGADEAGEEDEEENEEGGEGEGDEEEDEEEDEDDDDVSKPRKRRKGHGGLSAFIDYEAGVDEEEDEVEDEEEEEGYGLEQHPDDVLPAGAETDDRQHRRLDRERELAATLDAEKQAQLLKERYGRNRAAATDAVIVPKRLLLPSVDDPSIWGVRCKAGKEREVVFSIQKRIEDRPPGSRNPIKIISAFERGGAMSGYIYVEARRQADVMDALQDMSNVYPRTKMILVPVKEMPDLLRVQKSEELNPGGWVRIKRGKYMNDLAQIEEVETNGLAVTVRLVPRLDYGMNEDSGAPIMDPKRKRPGANPAVARPPQRLFSEAEAKKKHSKYLTATAGLGAKSWNYLGETYIDGFLIKDMKVQHLITKNVNPRLEEVTMFARDSENGTSNLDLASLAETLKNSTAEESYLPGDPVEVFKGEQQGLVGRTSSTRGDIVTILVTEGELAGQTIEAPVKTLRKRFREGDHVKVIGGSRYQDELGMVVQVRDDTVTLLSDMSMQEITVFSKDLRLSAETGVDGKLGMFDVHDLVQLDAATVACIVKVDRESLRVLDQNGSIRTILPSQVTNKITPRRDAVATDRNGAEIRHGDTVREVYGEQRSGVILHIHRSFLFIHNKAQAENAGIVVVRTTNVVTVSAKGGRPTGPDLSKMNPALMRNGAPGGMMAPPPSKTFGRDRLLGKTVLVKKGPFKGLLGIVKDTTDVQARVELHSKNKLVTIPKELLVVKDPVTGQTIDIGRGRGGPRVPQNSAAPSSGWQGGRTPMAAADSSRTPAWGAAMSSRTPAWSGAGLGSRTPAWKADGSRTAYGGAGSRTPAWNAGARTPYGGGFGSGSGNSDFDAFAAGSRTPAWGAASGSRTPAWSASANTTSRNDNKAYDAPTPGATYSAPTPGAYGGAPTPGLSAPTPGAWADSAPTPGAYNAPTPADFGEGSRPYDAPTPAMGGAAATPGAGAYGDTDDGAPRYEEGTPSP</sequence>
<comment type="function">
    <text evidence="1">The spt4-spt5 complex mediates both activation and inhibition of transcription elongation, and plays a role in pre-mRNA processing. This complex seems to be important for the stability of the RNA polymerase II elongation machinery on the chromatin template but not for the inherent ability of this machinery to translocate down the gene (By similarity).</text>
</comment>
<comment type="subunit">
    <text evidence="1">Component of the spt4-spt5 complex. Interacts with RNA polymerase II (By similarity).</text>
</comment>
<comment type="subcellular location">
    <subcellularLocation>
        <location evidence="1">Nucleus</location>
    </subcellularLocation>
</comment>
<comment type="similarity">
    <text evidence="3">Belongs to the SPT5 family.</text>
</comment>
<comment type="sequence caution" evidence="3">
    <conflict type="erroneous gene model prediction">
        <sequence resource="EMBL-CDS" id="CBF85391"/>
    </conflict>
</comment>
<name>SPT5_EMENI</name>
<protein>
    <recommendedName>
        <fullName>Transcription elongation factor spt5</fullName>
    </recommendedName>
    <alternativeName>
        <fullName>Chromatin elongation factor spt5</fullName>
    </alternativeName>
</protein>
<dbReference type="EMBL" id="AACD01000026">
    <property type="protein sequence ID" value="EAA64818.1"/>
    <property type="molecule type" value="Genomic_DNA"/>
</dbReference>
<dbReference type="EMBL" id="BN001307">
    <property type="protein sequence ID" value="CBF85391.1"/>
    <property type="status" value="ALT_SEQ"/>
    <property type="molecule type" value="Genomic_DNA"/>
</dbReference>
<dbReference type="RefSeq" id="XP_659302.1">
    <property type="nucleotide sequence ID" value="XM_654210.1"/>
</dbReference>
<dbReference type="SMR" id="Q5BCN2"/>
<dbReference type="FunCoup" id="Q5BCN2">
    <property type="interactions" value="1239"/>
</dbReference>
<dbReference type="STRING" id="227321.Q5BCN2"/>
<dbReference type="VEuPathDB" id="FungiDB:AN1698"/>
<dbReference type="eggNOG" id="KOG1999">
    <property type="taxonomic scope" value="Eukaryota"/>
</dbReference>
<dbReference type="HOGENOM" id="CLU_003537_1_1_1"/>
<dbReference type="InParanoid" id="Q5BCN2"/>
<dbReference type="Proteomes" id="UP000000560">
    <property type="component" value="Chromosome VII"/>
</dbReference>
<dbReference type="GO" id="GO:0032044">
    <property type="term" value="C:DSIF complex"/>
    <property type="evidence" value="ECO:0000318"/>
    <property type="project" value="GO_Central"/>
</dbReference>
<dbReference type="GO" id="GO:0003729">
    <property type="term" value="F:mRNA binding"/>
    <property type="evidence" value="ECO:0000318"/>
    <property type="project" value="GO_Central"/>
</dbReference>
<dbReference type="GO" id="GO:0006397">
    <property type="term" value="P:mRNA processing"/>
    <property type="evidence" value="ECO:0007669"/>
    <property type="project" value="UniProtKB-KW"/>
</dbReference>
<dbReference type="GO" id="GO:0032784">
    <property type="term" value="P:regulation of DNA-templated transcription elongation"/>
    <property type="evidence" value="ECO:0007669"/>
    <property type="project" value="InterPro"/>
</dbReference>
<dbReference type="GO" id="GO:0006357">
    <property type="term" value="P:regulation of transcription by RNA polymerase II"/>
    <property type="evidence" value="ECO:0007669"/>
    <property type="project" value="InterPro"/>
</dbReference>
<dbReference type="GO" id="GO:0006368">
    <property type="term" value="P:transcription elongation by RNA polymerase II"/>
    <property type="evidence" value="ECO:0000318"/>
    <property type="project" value="GO_Central"/>
</dbReference>
<dbReference type="GO" id="GO:0140673">
    <property type="term" value="P:transcription elongation-coupled chromatin remodeling"/>
    <property type="evidence" value="ECO:0007669"/>
    <property type="project" value="InterPro"/>
</dbReference>
<dbReference type="CDD" id="cd06081">
    <property type="entry name" value="KOW_Spt5_1"/>
    <property type="match status" value="1"/>
</dbReference>
<dbReference type="CDD" id="cd06082">
    <property type="entry name" value="KOW_Spt5_2"/>
    <property type="match status" value="1"/>
</dbReference>
<dbReference type="CDD" id="cd06083">
    <property type="entry name" value="KOW_Spt5_3"/>
    <property type="match status" value="1"/>
</dbReference>
<dbReference type="CDD" id="cd06084">
    <property type="entry name" value="KOW_Spt5_4"/>
    <property type="match status" value="1"/>
</dbReference>
<dbReference type="CDD" id="cd06085">
    <property type="entry name" value="KOW_Spt5_5"/>
    <property type="match status" value="1"/>
</dbReference>
<dbReference type="CDD" id="cd09888">
    <property type="entry name" value="NGN_Euk"/>
    <property type="match status" value="1"/>
</dbReference>
<dbReference type="FunFam" id="2.30.30.30:FF:000018">
    <property type="entry name" value="Transcription elongation factor SPT5"/>
    <property type="match status" value="1"/>
</dbReference>
<dbReference type="FunFam" id="2.30.30.30:FF:000029">
    <property type="entry name" value="Transcription elongation factor SPT5"/>
    <property type="match status" value="1"/>
</dbReference>
<dbReference type="FunFam" id="2.30.30.30:FF:000054">
    <property type="entry name" value="Transcription elongation factor SPT5"/>
    <property type="match status" value="1"/>
</dbReference>
<dbReference type="FunFam" id="3.30.70.940:FF:000005">
    <property type="entry name" value="Transcription elongation factor SPT5"/>
    <property type="match status" value="1"/>
</dbReference>
<dbReference type="Gene3D" id="2.30.30.30">
    <property type="match status" value="3"/>
</dbReference>
<dbReference type="Gene3D" id="3.30.70.940">
    <property type="entry name" value="NusG, N-terminal domain"/>
    <property type="match status" value="1"/>
</dbReference>
<dbReference type="InterPro" id="IPR005824">
    <property type="entry name" value="KOW"/>
</dbReference>
<dbReference type="InterPro" id="IPR041973">
    <property type="entry name" value="KOW_Spt5_1"/>
</dbReference>
<dbReference type="InterPro" id="IPR041975">
    <property type="entry name" value="KOW_Spt5_2"/>
</dbReference>
<dbReference type="InterPro" id="IPR041976">
    <property type="entry name" value="KOW_Spt5_3"/>
</dbReference>
<dbReference type="InterPro" id="IPR041977">
    <property type="entry name" value="KOW_Spt5_4"/>
</dbReference>
<dbReference type="InterPro" id="IPR041978">
    <property type="entry name" value="KOW_Spt5_5"/>
</dbReference>
<dbReference type="InterPro" id="IPR005100">
    <property type="entry name" value="NGN-domain"/>
</dbReference>
<dbReference type="InterPro" id="IPR006645">
    <property type="entry name" value="NGN-like_dom"/>
</dbReference>
<dbReference type="InterPro" id="IPR036735">
    <property type="entry name" value="NGN_dom_sf"/>
</dbReference>
<dbReference type="InterPro" id="IPR039385">
    <property type="entry name" value="NGN_Euk"/>
</dbReference>
<dbReference type="InterPro" id="IPR014722">
    <property type="entry name" value="Rib_uL2_dom2"/>
</dbReference>
<dbReference type="InterPro" id="IPR039659">
    <property type="entry name" value="SPT5"/>
</dbReference>
<dbReference type="InterPro" id="IPR024945">
    <property type="entry name" value="Spt5_C_dom"/>
</dbReference>
<dbReference type="InterPro" id="IPR022581">
    <property type="entry name" value="Spt5_N"/>
</dbReference>
<dbReference type="InterPro" id="IPR017071">
    <property type="entry name" value="TF_Spt5_eukaryote"/>
</dbReference>
<dbReference type="InterPro" id="IPR008991">
    <property type="entry name" value="Translation_prot_SH3-like_sf"/>
</dbReference>
<dbReference type="PANTHER" id="PTHR11125">
    <property type="entry name" value="SUPPRESSOR OF TY 5"/>
    <property type="match status" value="1"/>
</dbReference>
<dbReference type="PANTHER" id="PTHR11125:SF7">
    <property type="entry name" value="TRANSCRIPTION ELONGATION FACTOR SPT5"/>
    <property type="match status" value="1"/>
</dbReference>
<dbReference type="Pfam" id="PF12815">
    <property type="entry name" value="CTD"/>
    <property type="match status" value="1"/>
</dbReference>
<dbReference type="Pfam" id="PF23042">
    <property type="entry name" value="KOW1_SPT5"/>
    <property type="match status" value="1"/>
</dbReference>
<dbReference type="Pfam" id="PF23284">
    <property type="entry name" value="KOW2_Spt5"/>
    <property type="match status" value="1"/>
</dbReference>
<dbReference type="Pfam" id="PF23291">
    <property type="entry name" value="KOW4_SPT5"/>
    <property type="match status" value="1"/>
</dbReference>
<dbReference type="Pfam" id="PF23290">
    <property type="entry name" value="KOW5_SPT5"/>
    <property type="match status" value="1"/>
</dbReference>
<dbReference type="Pfam" id="PF23037">
    <property type="entry name" value="KOWx_SPT5"/>
    <property type="match status" value="1"/>
</dbReference>
<dbReference type="Pfam" id="PF03439">
    <property type="entry name" value="Spt5-NGN"/>
    <property type="match status" value="1"/>
</dbReference>
<dbReference type="Pfam" id="PF11942">
    <property type="entry name" value="Spt5_N"/>
    <property type="match status" value="1"/>
</dbReference>
<dbReference type="PIRSF" id="PIRSF036945">
    <property type="entry name" value="Spt5"/>
    <property type="match status" value="1"/>
</dbReference>
<dbReference type="SMART" id="SM01104">
    <property type="entry name" value="CTD"/>
    <property type="match status" value="1"/>
</dbReference>
<dbReference type="SMART" id="SM00739">
    <property type="entry name" value="KOW"/>
    <property type="match status" value="5"/>
</dbReference>
<dbReference type="SMART" id="SM00738">
    <property type="entry name" value="NGN"/>
    <property type="match status" value="1"/>
</dbReference>
<dbReference type="SUPFAM" id="SSF50104">
    <property type="entry name" value="Translation proteins SH3-like domain"/>
    <property type="match status" value="1"/>
</dbReference>
<organism>
    <name type="scientific">Emericella nidulans (strain FGSC A4 / ATCC 38163 / CBS 112.46 / NRRL 194 / M139)</name>
    <name type="common">Aspergillus nidulans</name>
    <dbReference type="NCBI Taxonomy" id="227321"/>
    <lineage>
        <taxon>Eukaryota</taxon>
        <taxon>Fungi</taxon>
        <taxon>Dikarya</taxon>
        <taxon>Ascomycota</taxon>
        <taxon>Pezizomycotina</taxon>
        <taxon>Eurotiomycetes</taxon>
        <taxon>Eurotiomycetidae</taxon>
        <taxon>Eurotiales</taxon>
        <taxon>Aspergillaceae</taxon>
        <taxon>Aspergillus</taxon>
        <taxon>Aspergillus subgen. Nidulantes</taxon>
    </lineage>
</organism>
<feature type="chain" id="PRO_0000238561" description="Transcription elongation factor spt5">
    <location>
        <begin position="1"/>
        <end position="1016"/>
    </location>
</feature>
<feature type="region of interest" description="Disordered" evidence="2">
    <location>
        <begin position="1"/>
        <end position="149"/>
    </location>
</feature>
<feature type="region of interest" description="Disordered" evidence="2">
    <location>
        <begin position="341"/>
        <end position="363"/>
    </location>
</feature>
<feature type="region of interest" description="Disordered" evidence="2">
    <location>
        <begin position="780"/>
        <end position="865"/>
    </location>
</feature>
<feature type="region of interest" description="Disordered" evidence="2">
    <location>
        <begin position="894"/>
        <end position="1016"/>
    </location>
</feature>
<feature type="compositionally biased region" description="Acidic residues" evidence="2">
    <location>
        <begin position="10"/>
        <end position="29"/>
    </location>
</feature>
<feature type="compositionally biased region" description="Basic and acidic residues" evidence="2">
    <location>
        <begin position="30"/>
        <end position="50"/>
    </location>
</feature>
<feature type="compositionally biased region" description="Acidic residues" evidence="2">
    <location>
        <begin position="51"/>
        <end position="88"/>
    </location>
</feature>
<feature type="compositionally biased region" description="Acidic residues" evidence="2">
    <location>
        <begin position="110"/>
        <end position="128"/>
    </location>
</feature>
<feature type="compositionally biased region" description="Polar residues" evidence="2">
    <location>
        <begin position="793"/>
        <end position="802"/>
    </location>
</feature>
<feature type="compositionally biased region" description="Polar residues" evidence="2">
    <location>
        <begin position="901"/>
        <end position="916"/>
    </location>
</feature>
<feature type="compositionally biased region" description="Low complexity" evidence="2">
    <location>
        <begin position="933"/>
        <end position="946"/>
    </location>
</feature>
<feature type="compositionally biased region" description="Low complexity" evidence="2">
    <location>
        <begin position="981"/>
        <end position="1000"/>
    </location>
</feature>
<feature type="compositionally biased region" description="Basic and acidic residues" evidence="2">
    <location>
        <begin position="1005"/>
        <end position="1016"/>
    </location>
</feature>
<evidence type="ECO:0000250" key="1"/>
<evidence type="ECO:0000256" key="2">
    <source>
        <dbReference type="SAM" id="MobiDB-lite"/>
    </source>
</evidence>
<evidence type="ECO:0000305" key="3"/>